<reference key="1">
    <citation type="journal article" date="2005" name="PLoS Biol.">
        <title>The genomes of Oryza sativa: a history of duplications.</title>
        <authorList>
            <person name="Yu J."/>
            <person name="Wang J."/>
            <person name="Lin W."/>
            <person name="Li S."/>
            <person name="Li H."/>
            <person name="Zhou J."/>
            <person name="Ni P."/>
            <person name="Dong W."/>
            <person name="Hu S."/>
            <person name="Zeng C."/>
            <person name="Zhang J."/>
            <person name="Zhang Y."/>
            <person name="Li R."/>
            <person name="Xu Z."/>
            <person name="Li S."/>
            <person name="Li X."/>
            <person name="Zheng H."/>
            <person name="Cong L."/>
            <person name="Lin L."/>
            <person name="Yin J."/>
            <person name="Geng J."/>
            <person name="Li G."/>
            <person name="Shi J."/>
            <person name="Liu J."/>
            <person name="Lv H."/>
            <person name="Li J."/>
            <person name="Wang J."/>
            <person name="Deng Y."/>
            <person name="Ran L."/>
            <person name="Shi X."/>
            <person name="Wang X."/>
            <person name="Wu Q."/>
            <person name="Li C."/>
            <person name="Ren X."/>
            <person name="Wang J."/>
            <person name="Wang X."/>
            <person name="Li D."/>
            <person name="Liu D."/>
            <person name="Zhang X."/>
            <person name="Ji Z."/>
            <person name="Zhao W."/>
            <person name="Sun Y."/>
            <person name="Zhang Z."/>
            <person name="Bao J."/>
            <person name="Han Y."/>
            <person name="Dong L."/>
            <person name="Ji J."/>
            <person name="Chen P."/>
            <person name="Wu S."/>
            <person name="Liu J."/>
            <person name="Xiao Y."/>
            <person name="Bu D."/>
            <person name="Tan J."/>
            <person name="Yang L."/>
            <person name="Ye C."/>
            <person name="Zhang J."/>
            <person name="Xu J."/>
            <person name="Zhou Y."/>
            <person name="Yu Y."/>
            <person name="Zhang B."/>
            <person name="Zhuang S."/>
            <person name="Wei H."/>
            <person name="Liu B."/>
            <person name="Lei M."/>
            <person name="Yu H."/>
            <person name="Li Y."/>
            <person name="Xu H."/>
            <person name="Wei S."/>
            <person name="He X."/>
            <person name="Fang L."/>
            <person name="Zhang Z."/>
            <person name="Zhang Y."/>
            <person name="Huang X."/>
            <person name="Su Z."/>
            <person name="Tong W."/>
            <person name="Li J."/>
            <person name="Tong Z."/>
            <person name="Li S."/>
            <person name="Ye J."/>
            <person name="Wang L."/>
            <person name="Fang L."/>
            <person name="Lei T."/>
            <person name="Chen C.-S."/>
            <person name="Chen H.-C."/>
            <person name="Xu Z."/>
            <person name="Li H."/>
            <person name="Huang H."/>
            <person name="Zhang F."/>
            <person name="Xu H."/>
            <person name="Li N."/>
            <person name="Zhao C."/>
            <person name="Li S."/>
            <person name="Dong L."/>
            <person name="Huang Y."/>
            <person name="Li L."/>
            <person name="Xi Y."/>
            <person name="Qi Q."/>
            <person name="Li W."/>
            <person name="Zhang B."/>
            <person name="Hu W."/>
            <person name="Zhang Y."/>
            <person name="Tian X."/>
            <person name="Jiao Y."/>
            <person name="Liang X."/>
            <person name="Jin J."/>
            <person name="Gao L."/>
            <person name="Zheng W."/>
            <person name="Hao B."/>
            <person name="Liu S.-M."/>
            <person name="Wang W."/>
            <person name="Yuan L."/>
            <person name="Cao M."/>
            <person name="McDermott J."/>
            <person name="Samudrala R."/>
            <person name="Wang J."/>
            <person name="Wong G.K.-S."/>
            <person name="Yang H."/>
        </authorList>
    </citation>
    <scope>NUCLEOTIDE SEQUENCE [LARGE SCALE GENOMIC DNA]</scope>
    <source>
        <strain>cv. 93-11</strain>
    </source>
</reference>
<gene>
    <name type="ORF">OsI_07694</name>
</gene>
<evidence type="ECO:0000250" key="1"/>
<evidence type="ECO:0000255" key="2">
    <source>
        <dbReference type="PROSITE-ProRule" id="PRU00146"/>
    </source>
</evidence>
<evidence type="ECO:0000256" key="3">
    <source>
        <dbReference type="SAM" id="MobiDB-lite"/>
    </source>
</evidence>
<evidence type="ECO:0000305" key="4"/>
<dbReference type="EMBL" id="CM000127">
    <property type="protein sequence ID" value="EEC73424.1"/>
    <property type="molecule type" value="Genomic_DNA"/>
</dbReference>
<dbReference type="SMR" id="B8ADZ3"/>
<dbReference type="STRING" id="39946.B8ADZ3"/>
<dbReference type="EnsemblPlants" id="BGIOSGA008446-TA">
    <property type="protein sequence ID" value="BGIOSGA008446-PA"/>
    <property type="gene ID" value="BGIOSGA008446"/>
</dbReference>
<dbReference type="EnsemblPlants" id="OsGoSa_02g0021640.01">
    <property type="protein sequence ID" value="OsGoSa_02g0021640.01"/>
    <property type="gene ID" value="OsGoSa_02g0021640"/>
</dbReference>
<dbReference type="EnsemblPlants" id="OsIR64_02g0020990.01">
    <property type="protein sequence ID" value="OsIR64_02g0020990.01"/>
    <property type="gene ID" value="OsIR64_02g0020990"/>
</dbReference>
<dbReference type="EnsemblPlants" id="OsKYG_02g0021180.01">
    <property type="protein sequence ID" value="OsKYG_02g0021180.01"/>
    <property type="gene ID" value="OsKYG_02g0021180"/>
</dbReference>
<dbReference type="EnsemblPlants" id="OsLaMu_02g0021170.01">
    <property type="protein sequence ID" value="OsLaMu_02g0021170.01"/>
    <property type="gene ID" value="OsLaMu_02g0021170"/>
</dbReference>
<dbReference type="EnsemblPlants" id="OsLima_02g0021440.01">
    <property type="protein sequence ID" value="OsLima_02g0021440.01"/>
    <property type="gene ID" value="OsLima_02g0021440"/>
</dbReference>
<dbReference type="EnsemblPlants" id="OsLiXu_02g0021340.01">
    <property type="protein sequence ID" value="OsLiXu_02g0021340.01"/>
    <property type="gene ID" value="OsLiXu_02g0021340"/>
</dbReference>
<dbReference type="EnsemblPlants" id="OsMH63_02G021760_01">
    <property type="protein sequence ID" value="OsMH63_02G021760_01"/>
    <property type="gene ID" value="OsMH63_02G021760"/>
</dbReference>
<dbReference type="EnsemblPlants" id="OsPr106_02g0021260.01">
    <property type="protein sequence ID" value="OsPr106_02g0021260.01"/>
    <property type="gene ID" value="OsPr106_02g0021260"/>
</dbReference>
<dbReference type="EnsemblPlants" id="OsZS97_02G021060_01">
    <property type="protein sequence ID" value="OsZS97_02G021060_01"/>
    <property type="gene ID" value="OsZS97_02G021060"/>
</dbReference>
<dbReference type="Gramene" id="BGIOSGA008446-TA">
    <property type="protein sequence ID" value="BGIOSGA008446-PA"/>
    <property type="gene ID" value="BGIOSGA008446"/>
</dbReference>
<dbReference type="Gramene" id="OsGoSa_02g0021640.01">
    <property type="protein sequence ID" value="OsGoSa_02g0021640.01"/>
    <property type="gene ID" value="OsGoSa_02g0021640"/>
</dbReference>
<dbReference type="Gramene" id="OsIR64_02g0020990.01">
    <property type="protein sequence ID" value="OsIR64_02g0020990.01"/>
    <property type="gene ID" value="OsIR64_02g0020990"/>
</dbReference>
<dbReference type="Gramene" id="OsKYG_02g0021180.01">
    <property type="protein sequence ID" value="OsKYG_02g0021180.01"/>
    <property type="gene ID" value="OsKYG_02g0021180"/>
</dbReference>
<dbReference type="Gramene" id="OsLaMu_02g0021170.01">
    <property type="protein sequence ID" value="OsLaMu_02g0021170.01"/>
    <property type="gene ID" value="OsLaMu_02g0021170"/>
</dbReference>
<dbReference type="Gramene" id="OsLima_02g0021440.01">
    <property type="protein sequence ID" value="OsLima_02g0021440.01"/>
    <property type="gene ID" value="OsLima_02g0021440"/>
</dbReference>
<dbReference type="Gramene" id="OsLiXu_02g0021340.01">
    <property type="protein sequence ID" value="OsLiXu_02g0021340.01"/>
    <property type="gene ID" value="OsLiXu_02g0021340"/>
</dbReference>
<dbReference type="Gramene" id="OsMH63_02G021760_01">
    <property type="protein sequence ID" value="OsMH63_02G021760_01"/>
    <property type="gene ID" value="OsMH63_02G021760"/>
</dbReference>
<dbReference type="Gramene" id="OsPr106_02g0021260.01">
    <property type="protein sequence ID" value="OsPr106_02g0021260.01"/>
    <property type="gene ID" value="OsPr106_02g0021260"/>
</dbReference>
<dbReference type="Gramene" id="OsZS97_02G021060_01">
    <property type="protein sequence ID" value="OsZS97_02G021060_01"/>
    <property type="gene ID" value="OsZS97_02G021060"/>
</dbReference>
<dbReference type="HOGENOM" id="CLU_058315_1_0_1"/>
<dbReference type="OMA" id="AVHHHTR"/>
<dbReference type="OrthoDB" id="436852at2759"/>
<dbReference type="Proteomes" id="UP000007015">
    <property type="component" value="Chromosome 2"/>
</dbReference>
<dbReference type="GO" id="GO:0005634">
    <property type="term" value="C:nucleus"/>
    <property type="evidence" value="ECO:0007669"/>
    <property type="project" value="UniProtKB-SubCell"/>
</dbReference>
<dbReference type="GO" id="GO:0042393">
    <property type="term" value="F:histone binding"/>
    <property type="evidence" value="ECO:0007669"/>
    <property type="project" value="InterPro"/>
</dbReference>
<dbReference type="GO" id="GO:0000976">
    <property type="term" value="F:transcription cis-regulatory region binding"/>
    <property type="evidence" value="ECO:0007669"/>
    <property type="project" value="TreeGrafter"/>
</dbReference>
<dbReference type="GO" id="GO:0003712">
    <property type="term" value="F:transcription coregulator activity"/>
    <property type="evidence" value="ECO:0007669"/>
    <property type="project" value="TreeGrafter"/>
</dbReference>
<dbReference type="GO" id="GO:0008270">
    <property type="term" value="F:zinc ion binding"/>
    <property type="evidence" value="ECO:0007669"/>
    <property type="project" value="UniProtKB-KW"/>
</dbReference>
<dbReference type="GO" id="GO:0006325">
    <property type="term" value="P:chromatin organization"/>
    <property type="evidence" value="ECO:0007669"/>
    <property type="project" value="UniProtKB-KW"/>
</dbReference>
<dbReference type="GO" id="GO:0006355">
    <property type="term" value="P:regulation of DNA-templated transcription"/>
    <property type="evidence" value="ECO:0007669"/>
    <property type="project" value="InterPro"/>
</dbReference>
<dbReference type="CDD" id="cd15613">
    <property type="entry name" value="PHD_AL_plant"/>
    <property type="match status" value="1"/>
</dbReference>
<dbReference type="FunFam" id="3.30.40.10:FF:000306">
    <property type="entry name" value="PHD finger alfin-like protein"/>
    <property type="match status" value="1"/>
</dbReference>
<dbReference type="Gene3D" id="3.30.40.10">
    <property type="entry name" value="Zinc/RING finger domain, C3HC4 (zinc finger)"/>
    <property type="match status" value="1"/>
</dbReference>
<dbReference type="InterPro" id="IPR045104">
    <property type="entry name" value="Alfin"/>
</dbReference>
<dbReference type="InterPro" id="IPR021998">
    <property type="entry name" value="Alfin_N"/>
</dbReference>
<dbReference type="InterPro" id="IPR044104">
    <property type="entry name" value="PHD_AL_plant"/>
</dbReference>
<dbReference type="InterPro" id="IPR019786">
    <property type="entry name" value="Zinc_finger_PHD-type_CS"/>
</dbReference>
<dbReference type="InterPro" id="IPR011011">
    <property type="entry name" value="Znf_FYVE_PHD"/>
</dbReference>
<dbReference type="InterPro" id="IPR001965">
    <property type="entry name" value="Znf_PHD"/>
</dbReference>
<dbReference type="InterPro" id="IPR019787">
    <property type="entry name" value="Znf_PHD-finger"/>
</dbReference>
<dbReference type="InterPro" id="IPR013083">
    <property type="entry name" value="Znf_RING/FYVE/PHD"/>
</dbReference>
<dbReference type="PANTHER" id="PTHR12321">
    <property type="entry name" value="CPG BINDING PROTEIN"/>
    <property type="match status" value="1"/>
</dbReference>
<dbReference type="PANTHER" id="PTHR12321:SF105">
    <property type="entry name" value="PHD FINGER PROTEIN ALFIN-LIKE 7"/>
    <property type="match status" value="1"/>
</dbReference>
<dbReference type="Pfam" id="PF12165">
    <property type="entry name" value="Alfin"/>
    <property type="match status" value="1"/>
</dbReference>
<dbReference type="Pfam" id="PF00628">
    <property type="entry name" value="PHD"/>
    <property type="match status" value="1"/>
</dbReference>
<dbReference type="SMART" id="SM00249">
    <property type="entry name" value="PHD"/>
    <property type="match status" value="1"/>
</dbReference>
<dbReference type="SUPFAM" id="SSF57903">
    <property type="entry name" value="FYVE/PHD zinc finger"/>
    <property type="match status" value="1"/>
</dbReference>
<dbReference type="PROSITE" id="PS01359">
    <property type="entry name" value="ZF_PHD_1"/>
    <property type="match status" value="1"/>
</dbReference>
<dbReference type="PROSITE" id="PS50016">
    <property type="entry name" value="ZF_PHD_2"/>
    <property type="match status" value="1"/>
</dbReference>
<protein>
    <recommendedName>
        <fullName>PHD finger protein ALFIN-LIKE 7</fullName>
    </recommendedName>
</protein>
<name>ALFL7_ORYSI</name>
<proteinExistence type="inferred from homology"/>
<accession>B8ADZ3</accession>
<feature type="chain" id="PRO_0000412948" description="PHD finger protein ALFIN-LIKE 7">
    <location>
        <begin position="1"/>
        <end position="267"/>
    </location>
</feature>
<feature type="zinc finger region" description="PHD-type" evidence="2">
    <location>
        <begin position="211"/>
        <end position="263"/>
    </location>
</feature>
<feature type="region of interest" description="Disordered" evidence="3">
    <location>
        <begin position="162"/>
        <end position="207"/>
    </location>
</feature>
<feature type="compositionally biased region" description="Low complexity" evidence="3">
    <location>
        <begin position="165"/>
        <end position="188"/>
    </location>
</feature>
<feature type="compositionally biased region" description="Acidic residues" evidence="3">
    <location>
        <begin position="196"/>
        <end position="207"/>
    </location>
</feature>
<feature type="site" description="Histone H3K4me3 binding" evidence="1">
    <location>
        <position position="221"/>
    </location>
</feature>
<feature type="site" description="Histone H3K4me3 binding" evidence="1">
    <location>
        <position position="227"/>
    </location>
</feature>
<feature type="site" description="Histone H3K4me3 binding" evidence="1">
    <location>
        <position position="231"/>
    </location>
</feature>
<feature type="site" description="Histone H3K4me3 binding" evidence="1">
    <location>
        <position position="236"/>
    </location>
</feature>
<organism>
    <name type="scientific">Oryza sativa subsp. indica</name>
    <name type="common">Rice</name>
    <dbReference type="NCBI Taxonomy" id="39946"/>
    <lineage>
        <taxon>Eukaryota</taxon>
        <taxon>Viridiplantae</taxon>
        <taxon>Streptophyta</taxon>
        <taxon>Embryophyta</taxon>
        <taxon>Tracheophyta</taxon>
        <taxon>Spermatophyta</taxon>
        <taxon>Magnoliopsida</taxon>
        <taxon>Liliopsida</taxon>
        <taxon>Poales</taxon>
        <taxon>Poaceae</taxon>
        <taxon>BOP clade</taxon>
        <taxon>Oryzoideae</taxon>
        <taxon>Oryzeae</taxon>
        <taxon>Oryzinae</taxon>
        <taxon>Oryza</taxon>
        <taxon>Oryza sativa</taxon>
    </lineage>
</organism>
<comment type="function">
    <text evidence="1">Histone-binding component that specifically recognizes H3 tails trimethylated on 'Lys-4' (H3K4me3), which mark transcription start sites of virtually all active genes.</text>
</comment>
<comment type="subunit">
    <text evidence="1">Interacts with H3K4me3 and to a lesser extent with H3K4me2.</text>
</comment>
<comment type="subcellular location">
    <subcellularLocation>
        <location evidence="1">Nucleus</location>
    </subcellularLocation>
</comment>
<comment type="domain">
    <text evidence="1">The PHD-type zinc finger mediates the binding to H3K4me3.</text>
</comment>
<comment type="similarity">
    <text evidence="4">Belongs to the Alfin family.</text>
</comment>
<sequence length="267" mass="29200">MDEGGGAGAAAAAAGNAAGAAVHHNARSAEDVFRDFRARRAGIVKALTTDVEKFYRQCDPEKENLCLYGLPNETWDVTLPAEEVPPELPEPALGINFARDGMIEKDWLSLVAVHSDAWLLSVAFYFGARFGFDKEARRRLFTMINGLPTVYEVVTGIAKKQTKVSNGSSKSNKSNPKPSKQSNSNSKPAKPPQPKDEEDSGPEGAEDEDQAYMCGACGETYANGEFWICCDVCEKWFHGKCVRITPAKAEHIKQYKCPGCSSKRSRE</sequence>
<keyword id="KW-0156">Chromatin regulator</keyword>
<keyword id="KW-0479">Metal-binding</keyword>
<keyword id="KW-0539">Nucleus</keyword>
<keyword id="KW-1185">Reference proteome</keyword>
<keyword id="KW-0804">Transcription</keyword>
<keyword id="KW-0805">Transcription regulation</keyword>
<keyword id="KW-0862">Zinc</keyword>
<keyword id="KW-0863">Zinc-finger</keyword>